<organism>
    <name type="scientific">Desulforamulus reducens (strain ATCC BAA-1160 / DSM 100696 / MI-1)</name>
    <name type="common">Desulfotomaculum reducens</name>
    <dbReference type="NCBI Taxonomy" id="349161"/>
    <lineage>
        <taxon>Bacteria</taxon>
        <taxon>Bacillati</taxon>
        <taxon>Bacillota</taxon>
        <taxon>Clostridia</taxon>
        <taxon>Eubacteriales</taxon>
        <taxon>Peptococcaceae</taxon>
        <taxon>Desulforamulus</taxon>
    </lineage>
</organism>
<feature type="chain" id="PRO_0000439795" description="Metal reductase">
    <location>
        <begin position="1"/>
        <end position="668"/>
    </location>
</feature>
<feature type="binding site" evidence="1">
    <location>
        <begin position="23"/>
        <end position="25"/>
    </location>
    <ligand>
        <name>FMN</name>
        <dbReference type="ChEBI" id="CHEBI:58210"/>
    </ligand>
</feature>
<feature type="binding site" evidence="1">
    <location>
        <position position="57"/>
    </location>
    <ligand>
        <name>FMN</name>
        <dbReference type="ChEBI" id="CHEBI:58210"/>
    </ligand>
</feature>
<feature type="binding site" evidence="1">
    <location>
        <position position="98"/>
    </location>
    <ligand>
        <name>FMN</name>
        <dbReference type="ChEBI" id="CHEBI:58210"/>
    </ligand>
</feature>
<feature type="binding site" evidence="1">
    <location>
        <position position="216"/>
    </location>
    <ligand>
        <name>FMN</name>
        <dbReference type="ChEBI" id="CHEBI:58210"/>
    </ligand>
</feature>
<feature type="binding site" evidence="1">
    <location>
        <position position="290"/>
    </location>
    <ligand>
        <name>FMN</name>
        <dbReference type="ChEBI" id="CHEBI:58210"/>
    </ligand>
</feature>
<feature type="binding site" evidence="1">
    <location>
        <begin position="312"/>
        <end position="313"/>
    </location>
    <ligand>
        <name>FMN</name>
        <dbReference type="ChEBI" id="CHEBI:58210"/>
    </ligand>
</feature>
<feature type="binding site" evidence="1">
    <location>
        <position position="336"/>
    </location>
    <ligand>
        <name>[4Fe-4S] cluster</name>
        <dbReference type="ChEBI" id="CHEBI:49883"/>
    </ligand>
</feature>
<feature type="binding site" evidence="1">
    <location>
        <position position="339"/>
    </location>
    <ligand>
        <name>[4Fe-4S] cluster</name>
        <dbReference type="ChEBI" id="CHEBI:49883"/>
    </ligand>
</feature>
<feature type="binding site" evidence="1">
    <location>
        <position position="341"/>
    </location>
    <ligand>
        <name>FAD</name>
        <dbReference type="ChEBI" id="CHEBI:57692"/>
    </ligand>
</feature>
<feature type="binding site" evidence="1">
    <location>
        <position position="343"/>
    </location>
    <ligand>
        <name>[4Fe-4S] cluster</name>
        <dbReference type="ChEBI" id="CHEBI:49883"/>
    </ligand>
</feature>
<feature type="binding site" evidence="1">
    <location>
        <position position="355"/>
    </location>
    <ligand>
        <name>[4Fe-4S] cluster</name>
        <dbReference type="ChEBI" id="CHEBI:49883"/>
    </ligand>
</feature>
<feature type="binding site" evidence="1">
    <location>
        <position position="386"/>
    </location>
    <ligand>
        <name>FAD</name>
        <dbReference type="ChEBI" id="CHEBI:57692"/>
    </ligand>
</feature>
<feature type="binding site" evidence="1">
    <location>
        <position position="405"/>
    </location>
    <ligand>
        <name>FAD</name>
        <dbReference type="ChEBI" id="CHEBI:57692"/>
    </ligand>
</feature>
<feature type="binding site" evidence="1">
    <location>
        <position position="413"/>
    </location>
    <ligand>
        <name>FAD</name>
        <dbReference type="ChEBI" id="CHEBI:57692"/>
    </ligand>
</feature>
<feature type="binding site" evidence="1">
    <location>
        <position position="423"/>
    </location>
    <ligand>
        <name>FAD</name>
        <dbReference type="ChEBI" id="CHEBI:57692"/>
    </ligand>
</feature>
<feature type="binding site" evidence="1">
    <location>
        <position position="450"/>
    </location>
    <ligand>
        <name>FAD</name>
        <dbReference type="ChEBI" id="CHEBI:57692"/>
    </ligand>
</feature>
<name>METRE_DESRM</name>
<proteinExistence type="evidence at protein level"/>
<evidence type="ECO:0000250" key="1">
    <source>
        <dbReference type="UniProtKB" id="P42593"/>
    </source>
</evidence>
<evidence type="ECO:0000269" key="2">
    <source>
    </source>
</evidence>
<evidence type="ECO:0000269" key="3">
    <source>
    </source>
</evidence>
<evidence type="ECO:0000303" key="4">
    <source>
    </source>
</evidence>
<evidence type="ECO:0000305" key="5"/>
<evidence type="ECO:0000305" key="6">
    <source>
    </source>
</evidence>
<evidence type="ECO:0000312" key="7">
    <source>
        <dbReference type="EMBL" id="ABO50931.1"/>
    </source>
</evidence>
<gene>
    <name evidence="7" type="ordered locus">Dred_2421</name>
</gene>
<protein>
    <recommendedName>
        <fullName evidence="4">Metal reductase</fullName>
        <ecNumber evidence="2">1.16.1.-</ecNumber>
    </recommendedName>
</protein>
<sequence length="668" mass="71851">MSILFSPAQIGTLQLRNRIIMTPMHLGYTPNGEVTDQLIEFYRVRARGGAGLIVVGGCGIDRIGNAYGMTQLDDDRFIPGLRRLADAVQAEGAKIVAQLYQAGRYAHSALTGQPAVAPSPIPSKLTGETPVELTEEKIAEIVASFAKAAKRAKTAGFDGVEIIASAGYLISQFLSPLTNKRTDRYGGDLQARMTFGLEVVAAVREAVGSDYPIIVRVAGNDFMPGSHTNTEAQVFCQAMEKSGVNAINVTGGWHETQVPQITMNVPPGAYAYLAYGIKQAVSIPVIACNRINTPDLAEAILQEGKADFIGMARSLMADPELPNKAMSGHPEQIRPCIGCNQGCLDHVFRMKPVSCLVNAEAGREAELSLTPTSQPGKILVIGAGAAGLEFARVAALRGHKVTIWEESDQAGGQLILAAAPPGRKDFLHLRTYLVNACRDLGVEIQYHTKATPENILSAVQEGKFNRVVIATGAHPITPPIPIEEGVKVIQAWDVLAGRSKAGQNIIIVGGGAVGVETALLLAESGTLDNETLRFLMLQQAETEKELYRLLIQGTKKITVLEMANGIGRDIGPSTRWSMLADLKRHQVNCLDETTVLEIRREGVLVKNAGTQKILPADTVILAVGSRSQNELYQALQGKVEYLSIIGDAIKPRKVMDAIHQAYNEAIKY</sequence>
<reference key="1">
    <citation type="submission" date="2007-03" db="EMBL/GenBank/DDBJ databases">
        <title>Complete sequence of Desulfotomaculum reducens MI-1.</title>
        <authorList>
            <consortium name="US DOE Joint Genome Institute"/>
            <person name="Copeland A."/>
            <person name="Lucas S."/>
            <person name="Lapidus A."/>
            <person name="Barry K."/>
            <person name="Detter J.C."/>
            <person name="Glavina del Rio T."/>
            <person name="Hammon N."/>
            <person name="Israni S."/>
            <person name="Dalin E."/>
            <person name="Tice H."/>
            <person name="Pitluck S."/>
            <person name="Sims D."/>
            <person name="Brettin T."/>
            <person name="Bruce D."/>
            <person name="Han C."/>
            <person name="Tapia R."/>
            <person name="Schmutz J."/>
            <person name="Larimer F."/>
            <person name="Land M."/>
            <person name="Hauser L."/>
            <person name="Kyrpides N."/>
            <person name="Kim E."/>
            <person name="Tebo B.M."/>
            <person name="Richardson P."/>
        </authorList>
    </citation>
    <scope>NUCLEOTIDE SEQUENCE [LARGE SCALE GENOMIC DNA]</scope>
    <source>
        <strain>ATCC BAA-1160 / DSM 100696 / MI-1</strain>
    </source>
</reference>
<reference key="2">
    <citation type="journal article" date="2015" name="Biochem. Biophys. Res. Commun.">
        <title>Molecular dissection of a putative iron reductase from Desulfotomaculum reducens MI-1.</title>
        <authorList>
            <person name="Li Z."/>
            <person name="Kim D.D."/>
            <person name="Nelson O.D."/>
            <person name="Otwell A.E."/>
            <person name="Richardson R.E."/>
            <person name="Callister S.J."/>
            <person name="Lin H."/>
        </authorList>
    </citation>
    <scope>DOMAIN</scope>
    <scope>COFACTOR</scope>
    <source>
        <strain>ATCC BAA-1160 / DSM 100696 / MI-1</strain>
    </source>
</reference>
<reference key="3">
    <citation type="journal article" date="2015" name="Environ. Microbiol.">
        <title>Identification of proteins capable of metal reduction from the proteome of the Gram-positive bacterium Desulfotomaculum reducens MI-1 using an NADH-based activity assay.</title>
        <authorList>
            <person name="Otwell A.E."/>
            <person name="Sherwood R.W."/>
            <person name="Zhang S."/>
            <person name="Nelson O.D."/>
            <person name="Li Z."/>
            <person name="Lin H."/>
            <person name="Callister S.J."/>
            <person name="Richardson R.E."/>
        </authorList>
    </citation>
    <scope>FUNCTION</scope>
    <scope>CATALYTIC ACTIVITY</scope>
    <scope>COFACTOR</scope>
    <scope>SUBUNIT</scope>
    <scope>SUBCELLULAR LOCATION</scope>
    <source>
        <strain>ATCC BAA-1160 / DSM 100696 / MI-1</strain>
    </source>
</reference>
<dbReference type="EC" id="1.16.1.-" evidence="2"/>
<dbReference type="EMBL" id="CP000612">
    <property type="protein sequence ID" value="ABO50931.1"/>
    <property type="molecule type" value="Genomic_DNA"/>
</dbReference>
<dbReference type="RefSeq" id="WP_011878729.1">
    <property type="nucleotide sequence ID" value="NC_009253.1"/>
</dbReference>
<dbReference type="SMR" id="A4J778"/>
<dbReference type="STRING" id="349161.Dred_2421"/>
<dbReference type="KEGG" id="drm:Dred_2421"/>
<dbReference type="eggNOG" id="COG0446">
    <property type="taxonomic scope" value="Bacteria"/>
</dbReference>
<dbReference type="eggNOG" id="COG1902">
    <property type="taxonomic scope" value="Bacteria"/>
</dbReference>
<dbReference type="HOGENOM" id="CLU_012153_1_2_9"/>
<dbReference type="OrthoDB" id="9772736at2"/>
<dbReference type="Proteomes" id="UP000001556">
    <property type="component" value="Chromosome"/>
</dbReference>
<dbReference type="GO" id="GO:0005737">
    <property type="term" value="C:cytoplasm"/>
    <property type="evidence" value="ECO:0007669"/>
    <property type="project" value="UniProtKB-SubCell"/>
</dbReference>
<dbReference type="GO" id="GO:0051539">
    <property type="term" value="F:4 iron, 4 sulfur cluster binding"/>
    <property type="evidence" value="ECO:0007669"/>
    <property type="project" value="UniProtKB-KW"/>
</dbReference>
<dbReference type="GO" id="GO:0010181">
    <property type="term" value="F:FMN binding"/>
    <property type="evidence" value="ECO:0007669"/>
    <property type="project" value="InterPro"/>
</dbReference>
<dbReference type="GO" id="GO:0046872">
    <property type="term" value="F:metal ion binding"/>
    <property type="evidence" value="ECO:0007669"/>
    <property type="project" value="UniProtKB-KW"/>
</dbReference>
<dbReference type="GO" id="GO:0016491">
    <property type="term" value="F:oxidoreductase activity"/>
    <property type="evidence" value="ECO:0007669"/>
    <property type="project" value="UniProtKB-KW"/>
</dbReference>
<dbReference type="GO" id="GO:0009056">
    <property type="term" value="P:catabolic process"/>
    <property type="evidence" value="ECO:0007669"/>
    <property type="project" value="UniProtKB-ARBA"/>
</dbReference>
<dbReference type="CDD" id="cd02803">
    <property type="entry name" value="OYE_like_FMN_family"/>
    <property type="match status" value="1"/>
</dbReference>
<dbReference type="Gene3D" id="3.20.20.70">
    <property type="entry name" value="Aldolase class I"/>
    <property type="match status" value="1"/>
</dbReference>
<dbReference type="Gene3D" id="3.50.50.60">
    <property type="entry name" value="FAD/NAD(P)-binding domain"/>
    <property type="match status" value="1"/>
</dbReference>
<dbReference type="Gene3D" id="3.40.50.720">
    <property type="entry name" value="NAD(P)-binding Rossmann-like Domain"/>
    <property type="match status" value="1"/>
</dbReference>
<dbReference type="InterPro" id="IPR013785">
    <property type="entry name" value="Aldolase_TIM"/>
</dbReference>
<dbReference type="InterPro" id="IPR036188">
    <property type="entry name" value="FAD/NAD-bd_sf"/>
</dbReference>
<dbReference type="InterPro" id="IPR023753">
    <property type="entry name" value="FAD/NAD-binding_dom"/>
</dbReference>
<dbReference type="InterPro" id="IPR051793">
    <property type="entry name" value="NADH:flavin_oxidoreductase"/>
</dbReference>
<dbReference type="InterPro" id="IPR001155">
    <property type="entry name" value="OxRdtase_FMN_N"/>
</dbReference>
<dbReference type="PANTHER" id="PTHR42917">
    <property type="entry name" value="2,4-DIENOYL-COA REDUCTASE"/>
    <property type="match status" value="1"/>
</dbReference>
<dbReference type="PANTHER" id="PTHR42917:SF2">
    <property type="entry name" value="2,4-DIENOYL-COA REDUCTASE [(2E)-ENOYL-COA-PRODUCING]"/>
    <property type="match status" value="1"/>
</dbReference>
<dbReference type="Pfam" id="PF00724">
    <property type="entry name" value="Oxidored_FMN"/>
    <property type="match status" value="1"/>
</dbReference>
<dbReference type="Pfam" id="PF07992">
    <property type="entry name" value="Pyr_redox_2"/>
    <property type="match status" value="1"/>
</dbReference>
<dbReference type="PRINTS" id="PR00368">
    <property type="entry name" value="FADPNR"/>
</dbReference>
<dbReference type="PRINTS" id="PR00469">
    <property type="entry name" value="PNDRDTASEII"/>
</dbReference>
<dbReference type="SUPFAM" id="SSF51905">
    <property type="entry name" value="FAD/NAD(P)-binding domain"/>
    <property type="match status" value="1"/>
</dbReference>
<dbReference type="SUPFAM" id="SSF51395">
    <property type="entry name" value="FMN-linked oxidoreductases"/>
    <property type="match status" value="1"/>
</dbReference>
<accession>A4J778</accession>
<comment type="function">
    <text evidence="2">Metal reductase able to reduce Fe(III)-chelates to Fe(II)-chelates, as well as soluble Cr(VI) and U(VI), using NADH as electron donor. Cannot use NADPH as an electron donor. Is unable to reduce riboflavin and FMN with NADH as electron donor. May have an in vivo role in metal reduction in D.reducens, which is an organism capable of reducing contaminant heavy metals and radionuclides.</text>
</comment>
<comment type="cofactor">
    <cofactor evidence="2 3">
        <name>FMN</name>
        <dbReference type="ChEBI" id="CHEBI:58210"/>
    </cofactor>
</comment>
<comment type="cofactor">
    <cofactor evidence="2 3">
        <name>FAD</name>
        <dbReference type="ChEBI" id="CHEBI:57692"/>
    </cofactor>
</comment>
<comment type="cofactor">
    <cofactor evidence="3">
        <name>[4Fe-4S] cluster</name>
        <dbReference type="ChEBI" id="CHEBI:49883"/>
    </cofactor>
</comment>
<comment type="subunit">
    <text evidence="2">Homotetramer.</text>
</comment>
<comment type="subcellular location">
    <subcellularLocation>
        <location evidence="6">Cytoplasm</location>
    </subcellularLocation>
</comment>
<comment type="domain">
    <text evidence="3">Has an FMN-binding N-terminal domain (NTD), an FAD-binding C-terminal domain (CTD), and a 4Fe-4S cluster between the two domains. CTD is the main contributor to the iron-reduction activity, and NTD and the 4Fe-4S cluster are not directly involved in such activity.</text>
</comment>
<comment type="similarity">
    <text evidence="5">In the N-terminal section; belongs to the NADH:flavin oxidoreductase/NADH oxidase family.</text>
</comment>
<keyword id="KW-0004">4Fe-4S</keyword>
<keyword id="KW-0963">Cytoplasm</keyword>
<keyword id="KW-0274">FAD</keyword>
<keyword id="KW-0285">Flavoprotein</keyword>
<keyword id="KW-0288">FMN</keyword>
<keyword id="KW-0408">Iron</keyword>
<keyword id="KW-0411">Iron-sulfur</keyword>
<keyword id="KW-0479">Metal-binding</keyword>
<keyword id="KW-0520">NAD</keyword>
<keyword id="KW-0560">Oxidoreductase</keyword>
<keyword id="KW-1185">Reference proteome</keyword>